<sequence>MAKLEAQQKDDLQEKLIAVNRVSKVVKGGRIFSFTALTVVGDGNGKIGYGYGKAREVPAAIQKAMEKARRNIVTVELNAGTLHHPVKGRHTGSLVYMQPASQGTGIIAGGAMRAVLEVAGVHNVLSKAYGSTNPINIVRATVDALVHMKSPSQIAAKRGLNVDEIRG</sequence>
<reference key="1">
    <citation type="submission" date="2007-07" db="EMBL/GenBank/DDBJ databases">
        <title>Complete sequence of chromosome of Shewanella baltica OS185.</title>
        <authorList>
            <consortium name="US DOE Joint Genome Institute"/>
            <person name="Copeland A."/>
            <person name="Lucas S."/>
            <person name="Lapidus A."/>
            <person name="Barry K."/>
            <person name="Glavina del Rio T."/>
            <person name="Dalin E."/>
            <person name="Tice H."/>
            <person name="Pitluck S."/>
            <person name="Sims D."/>
            <person name="Brettin T."/>
            <person name="Bruce D."/>
            <person name="Detter J.C."/>
            <person name="Han C."/>
            <person name="Schmutz J."/>
            <person name="Larimer F."/>
            <person name="Land M."/>
            <person name="Hauser L."/>
            <person name="Kyrpides N."/>
            <person name="Mikhailova N."/>
            <person name="Brettar I."/>
            <person name="Rodrigues J."/>
            <person name="Konstantinidis K."/>
            <person name="Tiedje J."/>
            <person name="Richardson P."/>
        </authorList>
    </citation>
    <scope>NUCLEOTIDE SEQUENCE [LARGE SCALE GENOMIC DNA]</scope>
    <source>
        <strain>OS185</strain>
    </source>
</reference>
<dbReference type="EMBL" id="CP000753">
    <property type="protein sequence ID" value="ABS06384.1"/>
    <property type="molecule type" value="Genomic_DNA"/>
</dbReference>
<dbReference type="RefSeq" id="WP_006083583.1">
    <property type="nucleotide sequence ID" value="NC_009665.1"/>
</dbReference>
<dbReference type="SMR" id="A6WHU5"/>
<dbReference type="GeneID" id="11770573"/>
<dbReference type="KEGG" id="sbm:Shew185_0213"/>
<dbReference type="HOGENOM" id="CLU_065898_2_2_6"/>
<dbReference type="GO" id="GO:0015935">
    <property type="term" value="C:small ribosomal subunit"/>
    <property type="evidence" value="ECO:0007669"/>
    <property type="project" value="InterPro"/>
</dbReference>
<dbReference type="GO" id="GO:0019843">
    <property type="term" value="F:rRNA binding"/>
    <property type="evidence" value="ECO:0007669"/>
    <property type="project" value="UniProtKB-UniRule"/>
</dbReference>
<dbReference type="GO" id="GO:0003735">
    <property type="term" value="F:structural constituent of ribosome"/>
    <property type="evidence" value="ECO:0007669"/>
    <property type="project" value="InterPro"/>
</dbReference>
<dbReference type="GO" id="GO:0006412">
    <property type="term" value="P:translation"/>
    <property type="evidence" value="ECO:0007669"/>
    <property type="project" value="UniProtKB-UniRule"/>
</dbReference>
<dbReference type="FunFam" id="3.30.160.20:FF:000001">
    <property type="entry name" value="30S ribosomal protein S5"/>
    <property type="match status" value="1"/>
</dbReference>
<dbReference type="FunFam" id="3.30.230.10:FF:000002">
    <property type="entry name" value="30S ribosomal protein S5"/>
    <property type="match status" value="1"/>
</dbReference>
<dbReference type="Gene3D" id="3.30.160.20">
    <property type="match status" value="1"/>
</dbReference>
<dbReference type="Gene3D" id="3.30.230.10">
    <property type="match status" value="1"/>
</dbReference>
<dbReference type="HAMAP" id="MF_01307_B">
    <property type="entry name" value="Ribosomal_uS5_B"/>
    <property type="match status" value="1"/>
</dbReference>
<dbReference type="InterPro" id="IPR020568">
    <property type="entry name" value="Ribosomal_Su5_D2-typ_SF"/>
</dbReference>
<dbReference type="InterPro" id="IPR000851">
    <property type="entry name" value="Ribosomal_uS5"/>
</dbReference>
<dbReference type="InterPro" id="IPR005712">
    <property type="entry name" value="Ribosomal_uS5_bac-type"/>
</dbReference>
<dbReference type="InterPro" id="IPR005324">
    <property type="entry name" value="Ribosomal_uS5_C"/>
</dbReference>
<dbReference type="InterPro" id="IPR013810">
    <property type="entry name" value="Ribosomal_uS5_N"/>
</dbReference>
<dbReference type="InterPro" id="IPR018192">
    <property type="entry name" value="Ribosomal_uS5_N_CS"/>
</dbReference>
<dbReference type="InterPro" id="IPR014721">
    <property type="entry name" value="Ribsml_uS5_D2-typ_fold_subgr"/>
</dbReference>
<dbReference type="NCBIfam" id="TIGR01021">
    <property type="entry name" value="rpsE_bact"/>
    <property type="match status" value="1"/>
</dbReference>
<dbReference type="PANTHER" id="PTHR48277">
    <property type="entry name" value="MITOCHONDRIAL RIBOSOMAL PROTEIN S5"/>
    <property type="match status" value="1"/>
</dbReference>
<dbReference type="PANTHER" id="PTHR48277:SF1">
    <property type="entry name" value="MITOCHONDRIAL RIBOSOMAL PROTEIN S5"/>
    <property type="match status" value="1"/>
</dbReference>
<dbReference type="Pfam" id="PF00333">
    <property type="entry name" value="Ribosomal_S5"/>
    <property type="match status" value="1"/>
</dbReference>
<dbReference type="Pfam" id="PF03719">
    <property type="entry name" value="Ribosomal_S5_C"/>
    <property type="match status" value="1"/>
</dbReference>
<dbReference type="SUPFAM" id="SSF54768">
    <property type="entry name" value="dsRNA-binding domain-like"/>
    <property type="match status" value="1"/>
</dbReference>
<dbReference type="SUPFAM" id="SSF54211">
    <property type="entry name" value="Ribosomal protein S5 domain 2-like"/>
    <property type="match status" value="1"/>
</dbReference>
<dbReference type="PROSITE" id="PS00585">
    <property type="entry name" value="RIBOSOMAL_S5"/>
    <property type="match status" value="1"/>
</dbReference>
<dbReference type="PROSITE" id="PS50881">
    <property type="entry name" value="S5_DSRBD"/>
    <property type="match status" value="1"/>
</dbReference>
<name>RS5_SHEB8</name>
<gene>
    <name evidence="1" type="primary">rpsE</name>
    <name type="ordered locus">Shew185_0213</name>
</gene>
<feature type="chain" id="PRO_0000323194" description="Small ribosomal subunit protein uS5">
    <location>
        <begin position="1"/>
        <end position="167"/>
    </location>
</feature>
<feature type="domain" description="S5 DRBM" evidence="1">
    <location>
        <begin position="12"/>
        <end position="75"/>
    </location>
</feature>
<comment type="function">
    <text evidence="1">With S4 and S12 plays an important role in translational accuracy.</text>
</comment>
<comment type="function">
    <text evidence="1">Located at the back of the 30S subunit body where it stabilizes the conformation of the head with respect to the body.</text>
</comment>
<comment type="subunit">
    <text evidence="1">Part of the 30S ribosomal subunit. Contacts proteins S4 and S8.</text>
</comment>
<comment type="domain">
    <text>The N-terminal domain interacts with the head of the 30S subunit; the C-terminal domain interacts with the body and contacts protein S4. The interaction surface between S4 and S5 is involved in control of translational fidelity.</text>
</comment>
<comment type="similarity">
    <text evidence="1">Belongs to the universal ribosomal protein uS5 family.</text>
</comment>
<organism>
    <name type="scientific">Shewanella baltica (strain OS185)</name>
    <dbReference type="NCBI Taxonomy" id="402882"/>
    <lineage>
        <taxon>Bacteria</taxon>
        <taxon>Pseudomonadati</taxon>
        <taxon>Pseudomonadota</taxon>
        <taxon>Gammaproteobacteria</taxon>
        <taxon>Alteromonadales</taxon>
        <taxon>Shewanellaceae</taxon>
        <taxon>Shewanella</taxon>
    </lineage>
</organism>
<keyword id="KW-0687">Ribonucleoprotein</keyword>
<keyword id="KW-0689">Ribosomal protein</keyword>
<keyword id="KW-0694">RNA-binding</keyword>
<keyword id="KW-0699">rRNA-binding</keyword>
<proteinExistence type="inferred from homology"/>
<accession>A6WHU5</accession>
<protein>
    <recommendedName>
        <fullName evidence="1">Small ribosomal subunit protein uS5</fullName>
    </recommendedName>
    <alternativeName>
        <fullName evidence="2">30S ribosomal protein S5</fullName>
    </alternativeName>
</protein>
<evidence type="ECO:0000255" key="1">
    <source>
        <dbReference type="HAMAP-Rule" id="MF_01307"/>
    </source>
</evidence>
<evidence type="ECO:0000305" key="2"/>